<keyword id="KW-0002">3D-structure</keyword>
<keyword id="KW-0903">Direct protein sequencing</keyword>
<keyword id="KW-0269">Exonuclease</keyword>
<keyword id="KW-0378">Hydrolase</keyword>
<keyword id="KW-0507">mRNA processing</keyword>
<keyword id="KW-0540">Nuclease</keyword>
<keyword id="KW-0539">Nucleus</keyword>
<keyword id="KW-1185">Reference proteome</keyword>
<keyword id="KW-0698">rRNA processing</keyword>
<keyword id="KW-0804">Transcription</keyword>
<keyword id="KW-0805">Transcription regulation</keyword>
<keyword id="KW-0806">Transcription termination</keyword>
<name>XRN2_SCHPO</name>
<dbReference type="EC" id="3.1.13.-"/>
<dbReference type="EMBL" id="D17752">
    <property type="protein sequence ID" value="BAA04601.1"/>
    <property type="molecule type" value="Genomic_DNA"/>
</dbReference>
<dbReference type="EMBL" id="CU329670">
    <property type="protein sequence ID" value="CAA93235.1"/>
    <property type="molecule type" value="Genomic_DNA"/>
</dbReference>
<dbReference type="PIR" id="S43891">
    <property type="entry name" value="S43891"/>
</dbReference>
<dbReference type="RefSeq" id="NP_594155.1">
    <property type="nucleotide sequence ID" value="NM_001019579.2"/>
</dbReference>
<dbReference type="PDB" id="3FQD">
    <property type="method" value="X-ray"/>
    <property type="resolution" value="2.20 A"/>
    <property type="chains" value="A=1-885"/>
</dbReference>
<dbReference type="PDB" id="8QSZ">
    <property type="method" value="EM"/>
    <property type="resolution" value="2.67 A"/>
    <property type="chains" value="X=1-893"/>
</dbReference>
<dbReference type="PDBsum" id="3FQD"/>
<dbReference type="PDBsum" id="8QSZ"/>
<dbReference type="EMDB" id="EMD-18643"/>
<dbReference type="SMR" id="P40848"/>
<dbReference type="BioGRID" id="279127">
    <property type="interactions" value="28"/>
</dbReference>
<dbReference type="DIP" id="DIP-59743N"/>
<dbReference type="FunCoup" id="P40848">
    <property type="interactions" value="1107"/>
</dbReference>
<dbReference type="IntAct" id="P40848">
    <property type="interactions" value="1"/>
</dbReference>
<dbReference type="STRING" id="284812.P40848"/>
<dbReference type="iPTMnet" id="P40848"/>
<dbReference type="PaxDb" id="4896-SPAC26A3.12c.1"/>
<dbReference type="EnsemblFungi" id="SPAC26A3.12c.1">
    <property type="protein sequence ID" value="SPAC26A3.12c.1:pep"/>
    <property type="gene ID" value="SPAC26A3.12c"/>
</dbReference>
<dbReference type="GeneID" id="2542674"/>
<dbReference type="KEGG" id="spo:2542674"/>
<dbReference type="PomBase" id="SPAC26A3.12c">
    <property type="gene designation" value="dhp1"/>
</dbReference>
<dbReference type="VEuPathDB" id="FungiDB:SPAC26A3.12c"/>
<dbReference type="eggNOG" id="KOG2044">
    <property type="taxonomic scope" value="Eukaryota"/>
</dbReference>
<dbReference type="HOGENOM" id="CLU_006038_1_1_1"/>
<dbReference type="InParanoid" id="P40848"/>
<dbReference type="OMA" id="ITHDMVV"/>
<dbReference type="PhylomeDB" id="P40848"/>
<dbReference type="PRO" id="PR:P40848"/>
<dbReference type="Proteomes" id="UP000002485">
    <property type="component" value="Chromosome I"/>
</dbReference>
<dbReference type="GO" id="GO:0090730">
    <property type="term" value="C:Las1 complex"/>
    <property type="evidence" value="ECO:0000266"/>
    <property type="project" value="PomBase"/>
</dbReference>
<dbReference type="GO" id="GO:0005634">
    <property type="term" value="C:nucleus"/>
    <property type="evidence" value="ECO:0000314"/>
    <property type="project" value="PomBase"/>
</dbReference>
<dbReference type="GO" id="GO:0004534">
    <property type="term" value="F:5'-3' RNA exonuclease activity"/>
    <property type="evidence" value="ECO:0000314"/>
    <property type="project" value="PomBase"/>
</dbReference>
<dbReference type="GO" id="GO:0003723">
    <property type="term" value="F:RNA binding"/>
    <property type="evidence" value="ECO:0000318"/>
    <property type="project" value="GO_Central"/>
</dbReference>
<dbReference type="GO" id="GO:0000448">
    <property type="term" value="P:cleavage in ITS2 between 5.8S rRNA and LSU-rRNA of tricistronic rRNA transcript (SSU-rRNA, 5.8S rRNA, LSU-rRNA)"/>
    <property type="evidence" value="ECO:0000305"/>
    <property type="project" value="PomBase"/>
</dbReference>
<dbReference type="GO" id="GO:0006353">
    <property type="term" value="P:DNA-templated transcription termination"/>
    <property type="evidence" value="ECO:0007669"/>
    <property type="project" value="UniProtKB-KW"/>
</dbReference>
<dbReference type="GO" id="GO:0006397">
    <property type="term" value="P:mRNA processing"/>
    <property type="evidence" value="ECO:0007669"/>
    <property type="project" value="UniProtKB-KW"/>
</dbReference>
<dbReference type="GO" id="GO:0071028">
    <property type="term" value="P:nuclear mRNA surveillance"/>
    <property type="evidence" value="ECO:0000266"/>
    <property type="project" value="PomBase"/>
</dbReference>
<dbReference type="GO" id="GO:0000956">
    <property type="term" value="P:nuclear-transcribed mRNA catabolic process"/>
    <property type="evidence" value="ECO:0000314"/>
    <property type="project" value="PomBase"/>
</dbReference>
<dbReference type="GO" id="GO:0051984">
    <property type="term" value="P:positive regulation of chromosome segregation"/>
    <property type="evidence" value="ECO:0000315"/>
    <property type="project" value="CACAO"/>
</dbReference>
<dbReference type="GO" id="GO:0180037">
    <property type="term" value="P:rapid tRNA decay"/>
    <property type="evidence" value="ECO:0000316"/>
    <property type="project" value="PomBase"/>
</dbReference>
<dbReference type="CDD" id="cd18673">
    <property type="entry name" value="PIN_XRN1-2-like"/>
    <property type="match status" value="1"/>
</dbReference>
<dbReference type="FunFam" id="1.25.40.1050:FF:000002">
    <property type="entry name" value="5'-3' exoribonuclease"/>
    <property type="match status" value="1"/>
</dbReference>
<dbReference type="FunFam" id="3.40.50.12390:FF:000003">
    <property type="entry name" value="5'-3' exoribonuclease"/>
    <property type="match status" value="1"/>
</dbReference>
<dbReference type="FunFam" id="3.40.50.12390:FF:000005">
    <property type="entry name" value="5'-3' exoribonuclease 2"/>
    <property type="match status" value="1"/>
</dbReference>
<dbReference type="Gene3D" id="1.25.40.1050">
    <property type="match status" value="1"/>
</dbReference>
<dbReference type="Gene3D" id="3.40.50.12390">
    <property type="match status" value="2"/>
</dbReference>
<dbReference type="InterPro" id="IPR027073">
    <property type="entry name" value="5_3_exoribonuclease"/>
</dbReference>
<dbReference type="InterPro" id="IPR041412">
    <property type="entry name" value="Xrn1_helical"/>
</dbReference>
<dbReference type="InterPro" id="IPR004859">
    <property type="entry name" value="Xrn1_N"/>
</dbReference>
<dbReference type="InterPro" id="IPR017151">
    <property type="entry name" value="Xrn2/3/4"/>
</dbReference>
<dbReference type="PANTHER" id="PTHR12341:SF41">
    <property type="entry name" value="5'-3' EXORIBONUCLEASE 2"/>
    <property type="match status" value="1"/>
</dbReference>
<dbReference type="PANTHER" id="PTHR12341">
    <property type="entry name" value="5'-&gt;3' EXORIBONUCLEASE"/>
    <property type="match status" value="1"/>
</dbReference>
<dbReference type="Pfam" id="PF17846">
    <property type="entry name" value="XRN_M"/>
    <property type="match status" value="1"/>
</dbReference>
<dbReference type="Pfam" id="PF03159">
    <property type="entry name" value="XRN_N"/>
    <property type="match status" value="1"/>
</dbReference>
<dbReference type="PIRSF" id="PIRSF037239">
    <property type="entry name" value="Exonuclease_Xrn2"/>
    <property type="match status" value="1"/>
</dbReference>
<organism>
    <name type="scientific">Schizosaccharomyces pombe (strain 972 / ATCC 24843)</name>
    <name type="common">Fission yeast</name>
    <dbReference type="NCBI Taxonomy" id="284812"/>
    <lineage>
        <taxon>Eukaryota</taxon>
        <taxon>Fungi</taxon>
        <taxon>Dikarya</taxon>
        <taxon>Ascomycota</taxon>
        <taxon>Taphrinomycotina</taxon>
        <taxon>Schizosaccharomycetes</taxon>
        <taxon>Schizosaccharomycetales</taxon>
        <taxon>Schizosaccharomycetaceae</taxon>
        <taxon>Schizosaccharomyces</taxon>
    </lineage>
</organism>
<evidence type="ECO:0000250" key="1"/>
<evidence type="ECO:0000250" key="2">
    <source>
        <dbReference type="UniProtKB" id="Q02792"/>
    </source>
</evidence>
<evidence type="ECO:0000255" key="3"/>
<evidence type="ECO:0000256" key="4">
    <source>
        <dbReference type="SAM" id="MobiDB-lite"/>
    </source>
</evidence>
<evidence type="ECO:0000269" key="5">
    <source>
    </source>
</evidence>
<evidence type="ECO:0000269" key="6">
    <source>
    </source>
</evidence>
<evidence type="ECO:0000303" key="7">
    <source>
    </source>
</evidence>
<evidence type="ECO:0000305" key="8"/>
<evidence type="ECO:0000312" key="9">
    <source>
        <dbReference type="PDB" id="3FQD"/>
    </source>
</evidence>
<evidence type="ECO:0007829" key="10">
    <source>
        <dbReference type="PDB" id="3FQD"/>
    </source>
</evidence>
<evidence type="ECO:0007829" key="11">
    <source>
        <dbReference type="PDB" id="8QSZ"/>
    </source>
</evidence>
<protein>
    <recommendedName>
        <fullName>5'-3' exoribonuclease 2</fullName>
        <ecNumber>3.1.13.-</ecNumber>
    </recommendedName>
    <alternativeName>
        <fullName>Protein dhp1</fullName>
    </alternativeName>
</protein>
<proteinExistence type="evidence at protein level"/>
<gene>
    <name type="primary">dhp1</name>
    <name evidence="7" type="synonym">Rat1</name>
    <name type="ORF">SPAC26A3.12c</name>
</gene>
<feature type="chain" id="PRO_0000071398" description="5'-3' exoribonuclease 2">
    <location>
        <begin position="1"/>
        <end position="991"/>
    </location>
</feature>
<feature type="region of interest" description="Disordered" evidence="4">
    <location>
        <begin position="404"/>
        <end position="461"/>
    </location>
</feature>
<feature type="region of interest" description="Disordered" evidence="4">
    <location>
        <begin position="547"/>
        <end position="582"/>
    </location>
</feature>
<feature type="region of interest" description="Disordered" evidence="4">
    <location>
        <begin position="872"/>
        <end position="991"/>
    </location>
</feature>
<feature type="short sequence motif" description="Nuclear localization signal" evidence="3">
    <location>
        <begin position="264"/>
        <end position="268"/>
    </location>
</feature>
<feature type="compositionally biased region" description="Basic and acidic residues" evidence="4">
    <location>
        <begin position="404"/>
        <end position="418"/>
    </location>
</feature>
<feature type="compositionally biased region" description="Low complexity" evidence="4">
    <location>
        <begin position="433"/>
        <end position="452"/>
    </location>
</feature>
<feature type="compositionally biased region" description="Low complexity" evidence="4">
    <location>
        <begin position="878"/>
        <end position="889"/>
    </location>
</feature>
<feature type="compositionally biased region" description="Low complexity" evidence="4">
    <location>
        <begin position="896"/>
        <end position="910"/>
    </location>
</feature>
<feature type="compositionally biased region" description="Polar residues" evidence="4">
    <location>
        <begin position="926"/>
        <end position="938"/>
    </location>
</feature>
<feature type="compositionally biased region" description="Gly residues" evidence="4">
    <location>
        <begin position="946"/>
        <end position="958"/>
    </location>
</feature>
<feature type="compositionally biased region" description="Polar residues" evidence="4">
    <location>
        <begin position="980"/>
        <end position="991"/>
    </location>
</feature>
<feature type="helix" evidence="10">
    <location>
        <begin position="3"/>
        <end position="13"/>
    </location>
</feature>
<feature type="helix" evidence="10">
    <location>
        <begin position="15"/>
        <end position="17"/>
    </location>
</feature>
<feature type="strand" evidence="10">
    <location>
        <begin position="18"/>
        <end position="20"/>
    </location>
</feature>
<feature type="strand" evidence="10">
    <location>
        <begin position="49"/>
        <end position="55"/>
    </location>
</feature>
<feature type="helix" evidence="10">
    <location>
        <begin position="57"/>
        <end position="64"/>
    </location>
</feature>
<feature type="strand" evidence="10">
    <location>
        <begin position="67"/>
        <end position="69"/>
    </location>
</feature>
<feature type="helix" evidence="10">
    <location>
        <begin position="75"/>
        <end position="93"/>
    </location>
</feature>
<feature type="strand" evidence="10">
    <location>
        <begin position="95"/>
        <end position="102"/>
    </location>
</feature>
<feature type="helix" evidence="10">
    <location>
        <begin position="109"/>
        <end position="143"/>
    </location>
</feature>
<feature type="helix" evidence="10">
    <location>
        <begin position="149"/>
        <end position="152"/>
    </location>
</feature>
<feature type="helix" evidence="10">
    <location>
        <begin position="159"/>
        <end position="161"/>
    </location>
</feature>
<feature type="helix" evidence="10">
    <location>
        <begin position="167"/>
        <end position="184"/>
    </location>
</feature>
<feature type="helix" evidence="10">
    <location>
        <begin position="188"/>
        <end position="190"/>
    </location>
</feature>
<feature type="strand" evidence="10">
    <location>
        <begin position="194"/>
        <end position="198"/>
    </location>
</feature>
<feature type="helix" evidence="10">
    <location>
        <begin position="206"/>
        <end position="218"/>
    </location>
</feature>
<feature type="strand" evidence="10">
    <location>
        <begin position="229"/>
        <end position="232"/>
    </location>
</feature>
<feature type="helix" evidence="10">
    <location>
        <begin position="238"/>
        <end position="244"/>
    </location>
</feature>
<feature type="strand" evidence="10">
    <location>
        <begin position="248"/>
        <end position="255"/>
    </location>
</feature>
<feature type="turn" evidence="10">
    <location>
        <begin position="269"/>
        <end position="273"/>
    </location>
</feature>
<feature type="strand" evidence="10">
    <location>
        <begin position="292"/>
        <end position="296"/>
    </location>
</feature>
<feature type="helix" evidence="10">
    <location>
        <begin position="297"/>
        <end position="308"/>
    </location>
</feature>
<feature type="helix" evidence="10">
    <location>
        <begin position="319"/>
        <end position="329"/>
    </location>
</feature>
<feature type="helix" evidence="10">
    <location>
        <begin position="330"/>
        <end position="333"/>
    </location>
</feature>
<feature type="strand" evidence="10">
    <location>
        <begin position="336"/>
        <end position="338"/>
    </location>
</feature>
<feature type="helix" evidence="10">
    <location>
        <begin position="346"/>
        <end position="348"/>
    </location>
</feature>
<feature type="helix" evidence="10">
    <location>
        <begin position="350"/>
        <end position="365"/>
    </location>
</feature>
<feature type="strand" evidence="10">
    <location>
        <begin position="369"/>
        <end position="371"/>
    </location>
</feature>
<feature type="helix" evidence="10">
    <location>
        <begin position="377"/>
        <end position="388"/>
    </location>
</feature>
<feature type="helix" evidence="10">
    <location>
        <begin position="391"/>
        <end position="402"/>
    </location>
</feature>
<feature type="turn" evidence="10">
    <location>
        <begin position="403"/>
        <end position="405"/>
    </location>
</feature>
<feature type="helix" evidence="11">
    <location>
        <begin position="482"/>
        <end position="490"/>
    </location>
</feature>
<feature type="turn" evidence="11">
    <location>
        <begin position="491"/>
        <end position="495"/>
    </location>
</feature>
<feature type="helix" evidence="10">
    <location>
        <begin position="591"/>
        <end position="598"/>
    </location>
</feature>
<feature type="helix" evidence="10">
    <location>
        <begin position="608"/>
        <end position="629"/>
    </location>
</feature>
<feature type="helix" evidence="10">
    <location>
        <begin position="647"/>
        <end position="649"/>
    </location>
</feature>
<feature type="helix" evidence="10">
    <location>
        <begin position="668"/>
        <end position="675"/>
    </location>
</feature>
<feature type="helix" evidence="10">
    <location>
        <begin position="678"/>
        <end position="683"/>
    </location>
</feature>
<feature type="helix" evidence="10">
    <location>
        <begin position="686"/>
        <end position="693"/>
    </location>
</feature>
<feature type="helix" evidence="10">
    <location>
        <begin position="700"/>
        <end position="702"/>
    </location>
</feature>
<feature type="strand" evidence="10">
    <location>
        <begin position="712"/>
        <end position="715"/>
    </location>
</feature>
<feature type="strand" evidence="10">
    <location>
        <begin position="719"/>
        <end position="722"/>
    </location>
</feature>
<feature type="helix" evidence="10">
    <location>
        <begin position="729"/>
        <end position="737"/>
    </location>
</feature>
<feature type="helix" evidence="10">
    <location>
        <begin position="740"/>
        <end position="742"/>
    </location>
</feature>
<feature type="helix" evidence="10">
    <location>
        <begin position="745"/>
        <end position="749"/>
    </location>
</feature>
<feature type="strand" evidence="10">
    <location>
        <begin position="757"/>
        <end position="761"/>
    </location>
</feature>
<feature type="helix" evidence="10">
    <location>
        <begin position="767"/>
        <end position="774"/>
    </location>
</feature>
<feature type="strand" evidence="10">
    <location>
        <begin position="776"/>
        <end position="778"/>
    </location>
</feature>
<feature type="strand" evidence="10">
    <location>
        <begin position="780"/>
        <end position="782"/>
    </location>
</feature>
<feature type="helix" evidence="10">
    <location>
        <begin position="788"/>
        <end position="791"/>
    </location>
</feature>
<feature type="strand" evidence="10">
    <location>
        <begin position="796"/>
        <end position="800"/>
    </location>
</feature>
<feature type="helix" evidence="10">
    <location>
        <begin position="819"/>
        <end position="824"/>
    </location>
</feature>
<feature type="strand" evidence="10">
    <location>
        <begin position="828"/>
        <end position="830"/>
    </location>
</feature>
<feature type="strand" evidence="10">
    <location>
        <begin position="833"/>
        <end position="839"/>
    </location>
</feature>
<feature type="helix" evidence="10">
    <location>
        <begin position="864"/>
        <end position="873"/>
    </location>
</feature>
<reference key="1">
    <citation type="journal article" date="1994" name="Mol. Gen. Genet.">
        <title>Molecular analysis of the dhp1+ gene of Schizosaccharomyces pombe: an essential gene that has homology to the DST2 and RAT1 genes of Saccharomyces cerevisiae.</title>
        <authorList>
            <person name="Sugano S."/>
            <person name="Shobuike T."/>
            <person name="Takeda T."/>
            <person name="Sugino A."/>
            <person name="Ikeda H."/>
        </authorList>
    </citation>
    <scope>NUCLEOTIDE SEQUENCE [GENOMIC DNA]</scope>
    <scope>PROTEIN SEQUENCE OF 1-29</scope>
    <source>
        <strain>ATCC 38365 / 975</strain>
    </source>
</reference>
<reference key="2">
    <citation type="journal article" date="2002" name="Nature">
        <title>The genome sequence of Schizosaccharomyces pombe.</title>
        <authorList>
            <person name="Wood V."/>
            <person name="Gwilliam R."/>
            <person name="Rajandream M.A."/>
            <person name="Lyne M.H."/>
            <person name="Lyne R."/>
            <person name="Stewart A."/>
            <person name="Sgouros J.G."/>
            <person name="Peat N."/>
            <person name="Hayles J."/>
            <person name="Baker S.G."/>
            <person name="Basham D."/>
            <person name="Bowman S."/>
            <person name="Brooks K."/>
            <person name="Brown D."/>
            <person name="Brown S."/>
            <person name="Chillingworth T."/>
            <person name="Churcher C.M."/>
            <person name="Collins M."/>
            <person name="Connor R."/>
            <person name="Cronin A."/>
            <person name="Davis P."/>
            <person name="Feltwell T."/>
            <person name="Fraser A."/>
            <person name="Gentles S."/>
            <person name="Goble A."/>
            <person name="Hamlin N."/>
            <person name="Harris D.E."/>
            <person name="Hidalgo J."/>
            <person name="Hodgson G."/>
            <person name="Holroyd S."/>
            <person name="Hornsby T."/>
            <person name="Howarth S."/>
            <person name="Huckle E.J."/>
            <person name="Hunt S."/>
            <person name="Jagels K."/>
            <person name="James K.D."/>
            <person name="Jones L."/>
            <person name="Jones M."/>
            <person name="Leather S."/>
            <person name="McDonald S."/>
            <person name="McLean J."/>
            <person name="Mooney P."/>
            <person name="Moule S."/>
            <person name="Mungall K.L."/>
            <person name="Murphy L.D."/>
            <person name="Niblett D."/>
            <person name="Odell C."/>
            <person name="Oliver K."/>
            <person name="O'Neil S."/>
            <person name="Pearson D."/>
            <person name="Quail M.A."/>
            <person name="Rabbinowitsch E."/>
            <person name="Rutherford K.M."/>
            <person name="Rutter S."/>
            <person name="Saunders D."/>
            <person name="Seeger K."/>
            <person name="Sharp S."/>
            <person name="Skelton J."/>
            <person name="Simmonds M.N."/>
            <person name="Squares R."/>
            <person name="Squares S."/>
            <person name="Stevens K."/>
            <person name="Taylor K."/>
            <person name="Taylor R.G."/>
            <person name="Tivey A."/>
            <person name="Walsh S.V."/>
            <person name="Warren T."/>
            <person name="Whitehead S."/>
            <person name="Woodward J.R."/>
            <person name="Volckaert G."/>
            <person name="Aert R."/>
            <person name="Robben J."/>
            <person name="Grymonprez B."/>
            <person name="Weltjens I."/>
            <person name="Vanstreels E."/>
            <person name="Rieger M."/>
            <person name="Schaefer M."/>
            <person name="Mueller-Auer S."/>
            <person name="Gabel C."/>
            <person name="Fuchs M."/>
            <person name="Duesterhoeft A."/>
            <person name="Fritzc C."/>
            <person name="Holzer E."/>
            <person name="Moestl D."/>
            <person name="Hilbert H."/>
            <person name="Borzym K."/>
            <person name="Langer I."/>
            <person name="Beck A."/>
            <person name="Lehrach H."/>
            <person name="Reinhardt R."/>
            <person name="Pohl T.M."/>
            <person name="Eger P."/>
            <person name="Zimmermann W."/>
            <person name="Wedler H."/>
            <person name="Wambutt R."/>
            <person name="Purnelle B."/>
            <person name="Goffeau A."/>
            <person name="Cadieu E."/>
            <person name="Dreano S."/>
            <person name="Gloux S."/>
            <person name="Lelaure V."/>
            <person name="Mottier S."/>
            <person name="Galibert F."/>
            <person name="Aves S.J."/>
            <person name="Xiang Z."/>
            <person name="Hunt C."/>
            <person name="Moore K."/>
            <person name="Hurst S.M."/>
            <person name="Lucas M."/>
            <person name="Rochet M."/>
            <person name="Gaillardin C."/>
            <person name="Tallada V.A."/>
            <person name="Garzon A."/>
            <person name="Thode G."/>
            <person name="Daga R.R."/>
            <person name="Cruzado L."/>
            <person name="Jimenez J."/>
            <person name="Sanchez M."/>
            <person name="del Rey F."/>
            <person name="Benito J."/>
            <person name="Dominguez A."/>
            <person name="Revuelta J.L."/>
            <person name="Moreno S."/>
            <person name="Armstrong J."/>
            <person name="Forsburg S.L."/>
            <person name="Cerutti L."/>
            <person name="Lowe T."/>
            <person name="McCombie W.R."/>
            <person name="Paulsen I."/>
            <person name="Potashkin J."/>
            <person name="Shpakovski G.V."/>
            <person name="Ussery D."/>
            <person name="Barrell B.G."/>
            <person name="Nurse P."/>
        </authorList>
    </citation>
    <scope>NUCLEOTIDE SEQUENCE [LARGE SCALE GENOMIC DNA]</scope>
    <source>
        <strain>972 / ATCC 24843</strain>
    </source>
</reference>
<reference key="3">
    <citation type="journal article" date="2001" name="Nucleic Acids Res.">
        <title>The dhp1+ gene, encoding a putative nuclear 5'3' exoribonuclease, is required for proper chromosome segregation in fission yeast.</title>
        <authorList>
            <person name="Shobuike T."/>
            <person name="Tatebayashi K."/>
            <person name="Tani T."/>
            <person name="Sugano S."/>
            <person name="Ikeda H."/>
        </authorList>
    </citation>
    <scope>FUNCTION</scope>
</reference>
<reference evidence="9" key="4">
    <citation type="journal article" date="2009" name="Nature">
        <title>Structure and function of the 5'--&gt;3' exoribonuclease Rat1 and its activating partner Rai1.</title>
        <authorList>
            <person name="Xiang S."/>
            <person name="Cooper-Morgan A."/>
            <person name="Jiao X."/>
            <person name="Kiledjian M."/>
            <person name="Manley J.L."/>
            <person name="Tong L."/>
        </authorList>
    </citation>
    <scope>X-RAY CRYSTALLOGRAPHY (2.2 ANGSTROMS) OF 1-885 IN COMPLEX WITH DIN1</scope>
    <scope>FUNCTION</scope>
    <scope>INTERACTION WITH DIN1</scope>
</reference>
<sequence length="991" mass="112368">MGVPALFRLLSRKFAKVITPVIEAPTEKLPDGTEIEPDLSLPNPNGVECDNLYLDMNGIVHPCSHPEDRPAPETEDEMMVAVFEYTDRILAMVRPRQLLFIAIDGVAPRAKMNQQRSRRFRSSREAALKEEELQAFIEEAKQQGIPIDENATKKKSWDSNCITPGTPFMDTLAKSLRYYIINKLNSDPCWRNVRFILSDASVPGEGEHKIMEFIRSQRVKPEYDPNTHHVVYGLDADLIMLGLATHEPHFRVLREDVFFQQGSTKKTKEERLGIKRLDDVSETNKVPVKKPFIWLNVSILREYLEVELYVPNLPFPFDLERAIDDWVFFIFFVGNDFLPHLPSLDIRDGAVERLTEIWRASLPHMGGYLTLDGSVNLARAEVILSAVGNQEDDIFKRLKQQEDRRNENYRRRQQRESNQESESYVDNVVIQRSVETQSTEVVTSSKSTSVDTKPPKKTQKIDAPAPVDLVNLSEKTSNRSLGATNRELINNRAANRLGLSREAAAVSSVNKLAASALKAQLVSNETLQNVPLEDSIASSSAYEDTDSIESSTPVVHPIDTKVSNVGQKRKAPDSTEENENTDTVRLYEPGYRERYYEQKFHISPDEPEKIREAVKHYVHGLCWVLLYYYQGCPSWTWYYPYHYAPFAADFKDLASIDVKFELNQPFKPYEQLLGVLPAASKNNLPEKLQTLMTDENSEIIDFYPENFTIDLNGKKFEWQGVALLPFIDENRLLNAVSKIYPQLTEEESKRNEDGSTLLFISEHHPMFSELVKQLYSKKRQGKPLKLSGKMAHGLFGKVNTNDSVIPNVSVQCPIDVTSADALQKYGSIDDNQSISLVFEVPKSHFVHKSMLLRGVKMPNRVLTPEDINQVRAERSFSSRRNNGNSYRGGHQSYGVRRSYQSQSYSSRQSYTGVTNGFANGGVQPPWSGNGNFPRSNASYNSRGGHEGYGGRSRGGGYSNGPPAGNHYSSNRGKGYGYQRESYNNNNRNGYY</sequence>
<comment type="function">
    <text evidence="1 2 5 6">Possesses 5'-&gt;3' exoribonuclease activity (PubMed:19194460). Required for the processing of nuclear mRNA and rRNA precursors. May promote the termination of transcription by RNA polymerase II (By similarity). Essential for vegetative cell growth and chromosome segregation (PubMed:11238999).</text>
</comment>
<comment type="subunit">
    <text evidence="6">Interacts with din1/rai1; the interaction is direct, stabilizes dhp1 protein structure and may stimulate its exoribonuclease activity (PubMed:19194460). The interaction also stimulates din1 pyrophosphohydrolase activity, probably by recruiting it to mRNA substrates (PubMed:19194460).</text>
</comment>
<comment type="interaction">
    <interactant intactId="EBI-15755578">
        <id>P40848</id>
    </interactant>
    <interactant intactId="EBI-15755601">
        <id>O13836</id>
        <label>din1</label>
    </interactant>
    <organismsDiffer>false</organismsDiffer>
    <experiments>2</experiments>
</comment>
<comment type="subcellular location">
    <subcellularLocation>
        <location>Nucleus</location>
    </subcellularLocation>
</comment>
<comment type="similarity">
    <text evidence="8">Belongs to the 5'-3' exonuclease family. XRN2/RAT1 subfamily.</text>
</comment>
<accession>P40848</accession>